<gene>
    <name evidence="1" type="primary">bpt</name>
    <name type="ordered locus">BMASAVP1_A1735</name>
</gene>
<evidence type="ECO:0000255" key="1">
    <source>
        <dbReference type="HAMAP-Rule" id="MF_00689"/>
    </source>
</evidence>
<sequence>MTHPTELPLSPLSALQFYATAPYPCSYLDGRVARSQVATPSHLINSDIYTELVKAGFRRSGVFTYRPYCDGCRACVPVRVPVDAFAPNRTQRRTWKRHRALVATVAALHYDEEHYALYMRYQSARHAGGGMDRDSRDQYEQFLLQSRINSRLVEFRDLDPAENGASTLRMVSMIDILGDGLSSVYTFFDPDESHASYGTYNILWQIEQAKSLRLPYVYLGYWIRESPKMAYKANFHPLEGLVDGRWKVLDPTLADLPPVDAALARAPLPGGHSGTR</sequence>
<accession>A1V4A4</accession>
<proteinExistence type="inferred from homology"/>
<protein>
    <recommendedName>
        <fullName evidence="1">Aspartate/glutamate leucyltransferase</fullName>
        <ecNumber evidence="1">2.3.2.29</ecNumber>
    </recommendedName>
</protein>
<name>BPT_BURMS</name>
<comment type="function">
    <text evidence="1">Functions in the N-end rule pathway of protein degradation where it conjugates Leu from its aminoacyl-tRNA to the N-termini of proteins containing an N-terminal aspartate or glutamate.</text>
</comment>
<comment type="catalytic activity">
    <reaction evidence="1">
        <text>N-terminal L-glutamyl-[protein] + L-leucyl-tRNA(Leu) = N-terminal L-leucyl-L-glutamyl-[protein] + tRNA(Leu) + H(+)</text>
        <dbReference type="Rhea" id="RHEA:50412"/>
        <dbReference type="Rhea" id="RHEA-COMP:9613"/>
        <dbReference type="Rhea" id="RHEA-COMP:9622"/>
        <dbReference type="Rhea" id="RHEA-COMP:12664"/>
        <dbReference type="Rhea" id="RHEA-COMP:12668"/>
        <dbReference type="ChEBI" id="CHEBI:15378"/>
        <dbReference type="ChEBI" id="CHEBI:64721"/>
        <dbReference type="ChEBI" id="CHEBI:78442"/>
        <dbReference type="ChEBI" id="CHEBI:78494"/>
        <dbReference type="ChEBI" id="CHEBI:133041"/>
        <dbReference type="EC" id="2.3.2.29"/>
    </reaction>
</comment>
<comment type="catalytic activity">
    <reaction evidence="1">
        <text>N-terminal L-aspartyl-[protein] + L-leucyl-tRNA(Leu) = N-terminal L-leucyl-L-aspartyl-[protein] + tRNA(Leu) + H(+)</text>
        <dbReference type="Rhea" id="RHEA:50420"/>
        <dbReference type="Rhea" id="RHEA-COMP:9613"/>
        <dbReference type="Rhea" id="RHEA-COMP:9622"/>
        <dbReference type="Rhea" id="RHEA-COMP:12669"/>
        <dbReference type="Rhea" id="RHEA-COMP:12674"/>
        <dbReference type="ChEBI" id="CHEBI:15378"/>
        <dbReference type="ChEBI" id="CHEBI:64720"/>
        <dbReference type="ChEBI" id="CHEBI:78442"/>
        <dbReference type="ChEBI" id="CHEBI:78494"/>
        <dbReference type="ChEBI" id="CHEBI:133042"/>
        <dbReference type="EC" id="2.3.2.29"/>
    </reaction>
</comment>
<comment type="subcellular location">
    <subcellularLocation>
        <location evidence="1">Cytoplasm</location>
    </subcellularLocation>
</comment>
<comment type="similarity">
    <text evidence="1">Belongs to the R-transferase family. Bpt subfamily.</text>
</comment>
<keyword id="KW-0012">Acyltransferase</keyword>
<keyword id="KW-0963">Cytoplasm</keyword>
<keyword id="KW-0808">Transferase</keyword>
<organism>
    <name type="scientific">Burkholderia mallei (strain SAVP1)</name>
    <dbReference type="NCBI Taxonomy" id="320388"/>
    <lineage>
        <taxon>Bacteria</taxon>
        <taxon>Pseudomonadati</taxon>
        <taxon>Pseudomonadota</taxon>
        <taxon>Betaproteobacteria</taxon>
        <taxon>Burkholderiales</taxon>
        <taxon>Burkholderiaceae</taxon>
        <taxon>Burkholderia</taxon>
        <taxon>pseudomallei group</taxon>
    </lineage>
</organism>
<dbReference type="EC" id="2.3.2.29" evidence="1"/>
<dbReference type="EMBL" id="CP000526">
    <property type="protein sequence ID" value="ABM51602.1"/>
    <property type="molecule type" value="Genomic_DNA"/>
</dbReference>
<dbReference type="RefSeq" id="WP_004192823.1">
    <property type="nucleotide sequence ID" value="NC_008785.1"/>
</dbReference>
<dbReference type="SMR" id="A1V4A4"/>
<dbReference type="KEGG" id="bmv:BMASAVP1_A1735"/>
<dbReference type="HOGENOM" id="CLU_077607_0_0_4"/>
<dbReference type="GO" id="GO:0005737">
    <property type="term" value="C:cytoplasm"/>
    <property type="evidence" value="ECO:0007669"/>
    <property type="project" value="UniProtKB-SubCell"/>
</dbReference>
<dbReference type="GO" id="GO:0004057">
    <property type="term" value="F:arginyl-tRNA--protein transferase activity"/>
    <property type="evidence" value="ECO:0007669"/>
    <property type="project" value="InterPro"/>
</dbReference>
<dbReference type="GO" id="GO:0008914">
    <property type="term" value="F:leucyl-tRNA--protein transferase activity"/>
    <property type="evidence" value="ECO:0007669"/>
    <property type="project" value="UniProtKB-UniRule"/>
</dbReference>
<dbReference type="GO" id="GO:0071596">
    <property type="term" value="P:ubiquitin-dependent protein catabolic process via the N-end rule pathway"/>
    <property type="evidence" value="ECO:0007669"/>
    <property type="project" value="InterPro"/>
</dbReference>
<dbReference type="HAMAP" id="MF_00689">
    <property type="entry name" value="Bpt"/>
    <property type="match status" value="1"/>
</dbReference>
<dbReference type="InterPro" id="IPR016181">
    <property type="entry name" value="Acyl_CoA_acyltransferase"/>
</dbReference>
<dbReference type="InterPro" id="IPR017138">
    <property type="entry name" value="Asp_Glu_LeuTrfase"/>
</dbReference>
<dbReference type="InterPro" id="IPR030700">
    <property type="entry name" value="N-end_Aminoacyl_Trfase"/>
</dbReference>
<dbReference type="InterPro" id="IPR007472">
    <property type="entry name" value="N-end_Aminoacyl_Trfase_C"/>
</dbReference>
<dbReference type="InterPro" id="IPR007471">
    <property type="entry name" value="N-end_Aminoacyl_Trfase_N"/>
</dbReference>
<dbReference type="NCBIfam" id="NF002341">
    <property type="entry name" value="PRK01305.1-1"/>
    <property type="match status" value="1"/>
</dbReference>
<dbReference type="NCBIfam" id="NF002342">
    <property type="entry name" value="PRK01305.1-3"/>
    <property type="match status" value="1"/>
</dbReference>
<dbReference type="NCBIfam" id="NF002346">
    <property type="entry name" value="PRK01305.2-3"/>
    <property type="match status" value="1"/>
</dbReference>
<dbReference type="PANTHER" id="PTHR21367">
    <property type="entry name" value="ARGININE-TRNA-PROTEIN TRANSFERASE 1"/>
    <property type="match status" value="1"/>
</dbReference>
<dbReference type="PANTHER" id="PTHR21367:SF1">
    <property type="entry name" value="ARGINYL-TRNA--PROTEIN TRANSFERASE 1"/>
    <property type="match status" value="1"/>
</dbReference>
<dbReference type="Pfam" id="PF04377">
    <property type="entry name" value="ATE_C"/>
    <property type="match status" value="1"/>
</dbReference>
<dbReference type="Pfam" id="PF04376">
    <property type="entry name" value="ATE_N"/>
    <property type="match status" value="1"/>
</dbReference>
<dbReference type="PIRSF" id="PIRSF037208">
    <property type="entry name" value="ATE_pro_prd"/>
    <property type="match status" value="1"/>
</dbReference>
<dbReference type="SUPFAM" id="SSF55729">
    <property type="entry name" value="Acyl-CoA N-acyltransferases (Nat)"/>
    <property type="match status" value="1"/>
</dbReference>
<feature type="chain" id="PRO_1000045128" description="Aspartate/glutamate leucyltransferase">
    <location>
        <begin position="1"/>
        <end position="276"/>
    </location>
</feature>
<reference key="1">
    <citation type="journal article" date="2010" name="Genome Biol. Evol.">
        <title>Continuing evolution of Burkholderia mallei through genome reduction and large-scale rearrangements.</title>
        <authorList>
            <person name="Losada L."/>
            <person name="Ronning C.M."/>
            <person name="DeShazer D."/>
            <person name="Woods D."/>
            <person name="Fedorova N."/>
            <person name="Kim H.S."/>
            <person name="Shabalina S.A."/>
            <person name="Pearson T.R."/>
            <person name="Brinkac L."/>
            <person name="Tan P."/>
            <person name="Nandi T."/>
            <person name="Crabtree J."/>
            <person name="Badger J."/>
            <person name="Beckstrom-Sternberg S."/>
            <person name="Saqib M."/>
            <person name="Schutzer S.E."/>
            <person name="Keim P."/>
            <person name="Nierman W.C."/>
        </authorList>
    </citation>
    <scope>NUCLEOTIDE SEQUENCE [LARGE SCALE GENOMIC DNA]</scope>
    <source>
        <strain>SAVP1</strain>
    </source>
</reference>